<feature type="chain" id="PRO_0000340256" description="Protein FAM72A">
    <location>
        <begin position="1"/>
        <end position="149"/>
    </location>
</feature>
<feature type="splice variant" id="VSP_034205" description="In isoform 2." evidence="3">
    <original>RCVSILCCKFCKQVLSSRGMKAVLLADTEIDLFSTDIPPTN</original>
    <variation>S</variation>
    <location>
        <begin position="11"/>
        <end position="51"/>
    </location>
</feature>
<feature type="mutagenesis site" description="Loss of UNG-binding." evidence="1">
    <original>W</original>
    <variation>R</variation>
    <location>
        <position position="125"/>
    </location>
</feature>
<gene>
    <name type="primary">FAM72A</name>
    <name type="synonym">UGENE</name>
</gene>
<dbReference type="EMBL" id="CR407567">
    <property type="protein sequence ID" value="CAH72365.1"/>
    <property type="molecule type" value="Genomic_DNA"/>
</dbReference>
<dbReference type="EMBL" id="CR407567">
    <property type="protein sequence ID" value="CAH72366.1"/>
    <property type="molecule type" value="Genomic_DNA"/>
</dbReference>
<dbReference type="EMBL" id="BC035696">
    <property type="protein sequence ID" value="AAH35696.1"/>
    <property type="molecule type" value="mRNA"/>
</dbReference>
<dbReference type="EMBL" id="BC146978">
    <property type="protein sequence ID" value="AAI46979.1"/>
    <property type="molecule type" value="mRNA"/>
</dbReference>
<dbReference type="EMBL" id="BC146992">
    <property type="protein sequence ID" value="AAI46993.1"/>
    <property type="molecule type" value="mRNA"/>
</dbReference>
<dbReference type="CCDS" id="CCDS73016.1">
    <molecule id="Q5TYM5-1"/>
</dbReference>
<dbReference type="CCDS" id="CCDS91153.1">
    <molecule id="Q5TYM5-2"/>
</dbReference>
<dbReference type="RefSeq" id="NP_001116640.1">
    <molecule id="Q5TYM5-1"/>
    <property type="nucleotide sequence ID" value="NM_001123168.3"/>
</dbReference>
<dbReference type="RefSeq" id="NP_001304830.1">
    <property type="nucleotide sequence ID" value="NM_001317901.1"/>
</dbReference>
<dbReference type="RefSeq" id="NP_001372169.1">
    <molecule id="Q5TYM5-1"/>
    <property type="nucleotide sequence ID" value="NM_001385240.1"/>
</dbReference>
<dbReference type="RefSeq" id="NP_001372170.1">
    <molecule id="Q5TYM5-1"/>
    <property type="nucleotide sequence ID" value="NM_001385241.1"/>
</dbReference>
<dbReference type="RefSeq" id="NP_001372171.1">
    <molecule id="Q5TYM5-1"/>
    <property type="nucleotide sequence ID" value="NM_001385242.1"/>
</dbReference>
<dbReference type="RefSeq" id="NP_001372180.1">
    <molecule id="Q5TYM5-2"/>
    <property type="nucleotide sequence ID" value="NM_001385251.1"/>
</dbReference>
<dbReference type="RefSeq" id="XP_011508269.1">
    <property type="nucleotide sequence ID" value="XM_011509967.1"/>
</dbReference>
<dbReference type="BioGRID" id="609932">
    <property type="interactions" value="2"/>
</dbReference>
<dbReference type="FunCoup" id="Q5TYM5">
    <property type="interactions" value="1051"/>
</dbReference>
<dbReference type="IntAct" id="Q5TYM5">
    <property type="interactions" value="2"/>
</dbReference>
<dbReference type="STRING" id="9606.ENSP00000356096"/>
<dbReference type="iPTMnet" id="Q5TYM5"/>
<dbReference type="PhosphoSitePlus" id="Q5TYM5"/>
<dbReference type="BioMuta" id="FAM72A"/>
<dbReference type="DMDM" id="74746671"/>
<dbReference type="MassIVE" id="Q5TYM5"/>
<dbReference type="PaxDb" id="9606-ENSP00000356096"/>
<dbReference type="PeptideAtlas" id="Q5TYM5"/>
<dbReference type="Antibodypedia" id="47104">
    <property type="antibodies" value="34 antibodies from 12 providers"/>
</dbReference>
<dbReference type="DNASU" id="729533"/>
<dbReference type="Ensembl" id="ENST00000341209.9">
    <molecule id="Q5TYM5-2"/>
    <property type="protein sequence ID" value="ENSP00000340661.5"/>
    <property type="gene ID" value="ENSG00000196550.11"/>
</dbReference>
<dbReference type="Ensembl" id="ENST00000367128.8">
    <molecule id="Q5TYM5-1"/>
    <property type="protein sequence ID" value="ENSP00000356096.3"/>
    <property type="gene ID" value="ENSG00000196550.11"/>
</dbReference>
<dbReference type="GeneID" id="729533"/>
<dbReference type="KEGG" id="hsa:729533"/>
<dbReference type="MANE-Select" id="ENST00000367128.8">
    <property type="protein sequence ID" value="ENSP00000356096.3"/>
    <property type="RefSeq nucleotide sequence ID" value="NM_001123168.3"/>
    <property type="RefSeq protein sequence ID" value="NP_001116640.1"/>
</dbReference>
<dbReference type="UCSC" id="uc001hdr.5">
    <molecule id="Q5TYM5-1"/>
    <property type="organism name" value="human"/>
</dbReference>
<dbReference type="AGR" id="HGNC:24044"/>
<dbReference type="CTD" id="729533"/>
<dbReference type="DisGeNET" id="729533"/>
<dbReference type="GeneCards" id="FAM72A"/>
<dbReference type="HGNC" id="HGNC:24044">
    <property type="gene designation" value="FAM72A"/>
</dbReference>
<dbReference type="HPA" id="ENSG00000196550">
    <property type="expression patterns" value="Tissue enhanced (lymphoid)"/>
</dbReference>
<dbReference type="MIM" id="614710">
    <property type="type" value="gene"/>
</dbReference>
<dbReference type="neXtProt" id="NX_Q5TYM5"/>
<dbReference type="OpenTargets" id="ENSG00000196550"/>
<dbReference type="PharmGKB" id="PA142671833"/>
<dbReference type="VEuPathDB" id="HostDB:ENSG00000196550"/>
<dbReference type="eggNOG" id="ENOG502S1HA">
    <property type="taxonomic scope" value="Eukaryota"/>
</dbReference>
<dbReference type="GeneTree" id="ENSGT00390000005106"/>
<dbReference type="HOGENOM" id="CLU_2176611_0_0_1"/>
<dbReference type="InParanoid" id="Q5TYM5"/>
<dbReference type="OMA" id="HLWIFNS"/>
<dbReference type="OrthoDB" id="2526683at2759"/>
<dbReference type="PAN-GO" id="Q5TYM5">
    <property type="GO annotations" value="1 GO annotation based on evolutionary models"/>
</dbReference>
<dbReference type="PhylomeDB" id="Q5TYM5"/>
<dbReference type="TreeFam" id="TF329231"/>
<dbReference type="PathwayCommons" id="Q5TYM5"/>
<dbReference type="SignaLink" id="Q5TYM5"/>
<dbReference type="BioGRID-ORCS" id="729533">
    <property type="hits" value="45 hits in 337 CRISPR screens"/>
</dbReference>
<dbReference type="ChiTaRS" id="FAM72A">
    <property type="organism name" value="human"/>
</dbReference>
<dbReference type="GenomeRNAi" id="729533"/>
<dbReference type="Pharos" id="Q5TYM5">
    <property type="development level" value="Tbio"/>
</dbReference>
<dbReference type="PRO" id="PR:Q5TYM5"/>
<dbReference type="Proteomes" id="UP000005640">
    <property type="component" value="Chromosome 1"/>
</dbReference>
<dbReference type="RNAct" id="Q5TYM5">
    <property type="molecule type" value="protein"/>
</dbReference>
<dbReference type="Bgee" id="ENSG00000196550">
    <property type="expression patterns" value="Expressed in primordial germ cell in gonad and 96 other cell types or tissues"/>
</dbReference>
<dbReference type="ExpressionAtlas" id="Q5TYM5">
    <property type="expression patterns" value="baseline and differential"/>
</dbReference>
<dbReference type="GO" id="GO:0005829">
    <property type="term" value="C:cytosol"/>
    <property type="evidence" value="ECO:0000314"/>
    <property type="project" value="HPA"/>
</dbReference>
<dbReference type="GO" id="GO:0043231">
    <property type="term" value="C:intracellular membrane-bounded organelle"/>
    <property type="evidence" value="ECO:0000314"/>
    <property type="project" value="HPA"/>
</dbReference>
<dbReference type="GO" id="GO:0005739">
    <property type="term" value="C:mitochondrion"/>
    <property type="evidence" value="ECO:0007669"/>
    <property type="project" value="UniProtKB-SubCell"/>
</dbReference>
<dbReference type="InterPro" id="IPR026768">
    <property type="entry name" value="YPEH2ZP"/>
</dbReference>
<dbReference type="PANTHER" id="PTHR31841">
    <property type="entry name" value="PROTEIN FAM72A-RELATED"/>
    <property type="match status" value="1"/>
</dbReference>
<dbReference type="PANTHER" id="PTHR31841:SF1">
    <property type="entry name" value="PROTEIN FAM72A-RELATED"/>
    <property type="match status" value="1"/>
</dbReference>
<dbReference type="Pfam" id="PF14976">
    <property type="entry name" value="YPEH2ZP"/>
    <property type="match status" value="1"/>
</dbReference>
<evidence type="ECO:0000269" key="1">
    <source>
    </source>
</evidence>
<evidence type="ECO:0000269" key="2">
    <source>
    </source>
</evidence>
<evidence type="ECO:0000305" key="3"/>
<keyword id="KW-0025">Alternative splicing</keyword>
<keyword id="KW-0963">Cytoplasm</keyword>
<keyword id="KW-0496">Mitochondrion</keyword>
<keyword id="KW-1185">Reference proteome</keyword>
<sequence length="149" mass="16619">MSTNICSFKDRCVSILCCKFCKQVLSSRGMKAVLLADTEIDLFSTDIPPTNAVDFTGRCYFTKICKCKLKDIACLKCGNIVGYHVIVPCSSCLLSCNNGHFWMFHSQAVYDINRLDSTGVNVLLWGNLPEIEESTDEDVLNISAEECIR</sequence>
<name>FA72A_HUMAN</name>
<accession>Q5TYM5</accession>
<accession>B2RV15</accession>
<accession>Q5TYM4</accession>
<protein>
    <recommendedName>
        <fullName>Protein FAM72A</fullName>
    </recommendedName>
    <alternativeName>
        <fullName>Latent membrane protein 1-induced protein</fullName>
        <shortName>LMP1-induced protein</shortName>
        <shortName>LMPIP</shortName>
    </alternativeName>
</protein>
<reference key="1">
    <citation type="journal article" date="2006" name="Nature">
        <title>The DNA sequence and biological annotation of human chromosome 1.</title>
        <authorList>
            <person name="Gregory S.G."/>
            <person name="Barlow K.F."/>
            <person name="McLay K.E."/>
            <person name="Kaul R."/>
            <person name="Swarbreck D."/>
            <person name="Dunham A."/>
            <person name="Scott C.E."/>
            <person name="Howe K.L."/>
            <person name="Woodfine K."/>
            <person name="Spencer C.C.A."/>
            <person name="Jones M.C."/>
            <person name="Gillson C."/>
            <person name="Searle S."/>
            <person name="Zhou Y."/>
            <person name="Kokocinski F."/>
            <person name="McDonald L."/>
            <person name="Evans R."/>
            <person name="Phillips K."/>
            <person name="Atkinson A."/>
            <person name="Cooper R."/>
            <person name="Jones C."/>
            <person name="Hall R.E."/>
            <person name="Andrews T.D."/>
            <person name="Lloyd C."/>
            <person name="Ainscough R."/>
            <person name="Almeida J.P."/>
            <person name="Ambrose K.D."/>
            <person name="Anderson F."/>
            <person name="Andrew R.W."/>
            <person name="Ashwell R.I.S."/>
            <person name="Aubin K."/>
            <person name="Babbage A.K."/>
            <person name="Bagguley C.L."/>
            <person name="Bailey J."/>
            <person name="Beasley H."/>
            <person name="Bethel G."/>
            <person name="Bird C.P."/>
            <person name="Bray-Allen S."/>
            <person name="Brown J.Y."/>
            <person name="Brown A.J."/>
            <person name="Buckley D."/>
            <person name="Burton J."/>
            <person name="Bye J."/>
            <person name="Carder C."/>
            <person name="Chapman J.C."/>
            <person name="Clark S.Y."/>
            <person name="Clarke G."/>
            <person name="Clee C."/>
            <person name="Cobley V."/>
            <person name="Collier R.E."/>
            <person name="Corby N."/>
            <person name="Coville G.J."/>
            <person name="Davies J."/>
            <person name="Deadman R."/>
            <person name="Dunn M."/>
            <person name="Earthrowl M."/>
            <person name="Ellington A.G."/>
            <person name="Errington H."/>
            <person name="Frankish A."/>
            <person name="Frankland J."/>
            <person name="French L."/>
            <person name="Garner P."/>
            <person name="Garnett J."/>
            <person name="Gay L."/>
            <person name="Ghori M.R.J."/>
            <person name="Gibson R."/>
            <person name="Gilby L.M."/>
            <person name="Gillett W."/>
            <person name="Glithero R.J."/>
            <person name="Grafham D.V."/>
            <person name="Griffiths C."/>
            <person name="Griffiths-Jones S."/>
            <person name="Grocock R."/>
            <person name="Hammond S."/>
            <person name="Harrison E.S.I."/>
            <person name="Hart E."/>
            <person name="Haugen E."/>
            <person name="Heath P.D."/>
            <person name="Holmes S."/>
            <person name="Holt K."/>
            <person name="Howden P.J."/>
            <person name="Hunt A.R."/>
            <person name="Hunt S.E."/>
            <person name="Hunter G."/>
            <person name="Isherwood J."/>
            <person name="James R."/>
            <person name="Johnson C."/>
            <person name="Johnson D."/>
            <person name="Joy A."/>
            <person name="Kay M."/>
            <person name="Kershaw J.K."/>
            <person name="Kibukawa M."/>
            <person name="Kimberley A.M."/>
            <person name="King A."/>
            <person name="Knights A.J."/>
            <person name="Lad H."/>
            <person name="Laird G."/>
            <person name="Lawlor S."/>
            <person name="Leongamornlert D.A."/>
            <person name="Lloyd D.M."/>
            <person name="Loveland J."/>
            <person name="Lovell J."/>
            <person name="Lush M.J."/>
            <person name="Lyne R."/>
            <person name="Martin S."/>
            <person name="Mashreghi-Mohammadi M."/>
            <person name="Matthews L."/>
            <person name="Matthews N.S.W."/>
            <person name="McLaren S."/>
            <person name="Milne S."/>
            <person name="Mistry S."/>
            <person name="Moore M.J.F."/>
            <person name="Nickerson T."/>
            <person name="O'Dell C.N."/>
            <person name="Oliver K."/>
            <person name="Palmeiri A."/>
            <person name="Palmer S.A."/>
            <person name="Parker A."/>
            <person name="Patel D."/>
            <person name="Pearce A.V."/>
            <person name="Peck A.I."/>
            <person name="Pelan S."/>
            <person name="Phelps K."/>
            <person name="Phillimore B.J."/>
            <person name="Plumb R."/>
            <person name="Rajan J."/>
            <person name="Raymond C."/>
            <person name="Rouse G."/>
            <person name="Saenphimmachak C."/>
            <person name="Sehra H.K."/>
            <person name="Sheridan E."/>
            <person name="Shownkeen R."/>
            <person name="Sims S."/>
            <person name="Skuce C.D."/>
            <person name="Smith M."/>
            <person name="Steward C."/>
            <person name="Subramanian S."/>
            <person name="Sycamore N."/>
            <person name="Tracey A."/>
            <person name="Tromans A."/>
            <person name="Van Helmond Z."/>
            <person name="Wall M."/>
            <person name="Wallis J.M."/>
            <person name="White S."/>
            <person name="Whitehead S.L."/>
            <person name="Wilkinson J.E."/>
            <person name="Willey D.L."/>
            <person name="Williams H."/>
            <person name="Wilming L."/>
            <person name="Wray P.W."/>
            <person name="Wu Z."/>
            <person name="Coulson A."/>
            <person name="Vaudin M."/>
            <person name="Sulston J.E."/>
            <person name="Durbin R.M."/>
            <person name="Hubbard T."/>
            <person name="Wooster R."/>
            <person name="Dunham I."/>
            <person name="Carter N.P."/>
            <person name="McVean G."/>
            <person name="Ross M.T."/>
            <person name="Harrow J."/>
            <person name="Olson M.V."/>
            <person name="Beck S."/>
            <person name="Rogers J."/>
            <person name="Bentley D.R."/>
        </authorList>
    </citation>
    <scope>NUCLEOTIDE SEQUENCE [LARGE SCALE GENOMIC DNA]</scope>
</reference>
<reference key="2">
    <citation type="journal article" date="2004" name="Genome Res.">
        <title>The status, quality, and expansion of the NIH full-length cDNA project: the Mammalian Gene Collection (MGC).</title>
        <authorList>
            <consortium name="The MGC Project Team"/>
        </authorList>
    </citation>
    <scope>NUCLEOTIDE SEQUENCE [LARGE SCALE MRNA] (ISOFORM 1)</scope>
    <source>
        <tissue>Skin</tissue>
    </source>
</reference>
<reference key="3">
    <citation type="journal article" date="2008" name="Cancer Res.">
        <title>Ugene, a newly identified protein that is commonly overexpressed in cancer and binds uracil DNA glycosylase.</title>
        <authorList>
            <person name="Guo C."/>
            <person name="Zhang X."/>
            <person name="Fink S.P."/>
            <person name="Platzer P."/>
            <person name="Wilson K."/>
            <person name="Willson J.K."/>
            <person name="Wang Z."/>
            <person name="Markowitz S.D."/>
        </authorList>
    </citation>
    <scope>INTERACTION WITH UNG</scope>
    <scope>SUBCELLULAR LOCATION</scope>
    <scope>TISSUE SPECIFICITY</scope>
    <scope>MUTAGENESIS OF TRP-125</scope>
</reference>
<reference key="4">
    <citation type="journal article" date="2011" name="Oncogene">
        <title>Functional interaction of Ugene and EBV infection mediates tumorigenic effects.</title>
        <authorList>
            <person name="Wang L.T."/>
            <person name="Lin C.S."/>
            <person name="Chai C.Y."/>
            <person name="Liu K.Y."/>
            <person name="Chen J.Y."/>
            <person name="Hsu S.H."/>
        </authorList>
    </citation>
    <scope>FUNCTION</scope>
    <scope>SUBCELLULAR LOCATION</scope>
    <scope>INDUCTION BY EBV INFECTION</scope>
</reference>
<comment type="function">
    <text evidence="2">May play a role in the regulation of cellular reactive oxygen species metabolism. May participate in cell growth regulation.</text>
</comment>
<comment type="subunit">
    <text evidence="1">Interacts with UNG.</text>
</comment>
<comment type="interaction">
    <interactant intactId="EBI-10237116">
        <id>Q5TYM5</id>
    </interactant>
    <interactant intactId="EBI-2350461">
        <id>Q15777</id>
        <label>MPPED2</label>
    </interactant>
    <organismsDiffer>false</organismsDiffer>
    <experiments>3</experiments>
</comment>
<comment type="interaction">
    <interactant intactId="EBI-10237116">
        <id>Q5TYM5</id>
    </interactant>
    <interactant intactId="EBI-741158">
        <id>Q96HA8</id>
        <label>NTAQ1</label>
    </interactant>
    <organismsDiffer>false</organismsDiffer>
    <experiments>3</experiments>
</comment>
<comment type="subcellular location">
    <subcellularLocation>
        <location>Cytoplasm</location>
    </subcellularLocation>
    <subcellularLocation>
        <location>Mitochondrion</location>
    </subcellularLocation>
    <text evidence="1 2">A V5 epitope-tagged construct has been shown to localize to the nucleus (PubMed:18676834). 5-7% of total FAM72A is associated with mitochondria around the nucleus in HEK293 cells (PubMed:21317926).</text>
</comment>
<comment type="alternative products">
    <event type="alternative splicing"/>
    <isoform>
        <id>Q5TYM5-1</id>
        <name>1</name>
        <name>Ugene-p</name>
        <sequence type="displayed"/>
    </isoform>
    <isoform>
        <id>Q5TYM5-2</id>
        <name>2</name>
        <sequence type="described" ref="VSP_034205"/>
    </isoform>
</comment>
<comment type="tissue specificity">
    <text evidence="1">May be up-regulated in malignant colon cancers, compared to normal colon and colon adenomas. Expression is also elevated in other common cancer types, including breast, lung, uterus, and ovary.</text>
</comment>
<comment type="induction">
    <text evidence="2">Up-regulated in peripheral blood mononuclear cells following Epstein-Barr virus (EBV) infection or following transfection with EBV LMP1 protein.</text>
</comment>
<comment type="miscellaneous">
    <text>Highly homologous to GCUD2 but localized to a distinct locus.</text>
</comment>
<comment type="similarity">
    <text evidence="3">Belongs to the FAM72 family.</text>
</comment>
<organism>
    <name type="scientific">Homo sapiens</name>
    <name type="common">Human</name>
    <dbReference type="NCBI Taxonomy" id="9606"/>
    <lineage>
        <taxon>Eukaryota</taxon>
        <taxon>Metazoa</taxon>
        <taxon>Chordata</taxon>
        <taxon>Craniata</taxon>
        <taxon>Vertebrata</taxon>
        <taxon>Euteleostomi</taxon>
        <taxon>Mammalia</taxon>
        <taxon>Eutheria</taxon>
        <taxon>Euarchontoglires</taxon>
        <taxon>Primates</taxon>
        <taxon>Haplorrhini</taxon>
        <taxon>Catarrhini</taxon>
        <taxon>Hominidae</taxon>
        <taxon>Homo</taxon>
    </lineage>
</organism>
<proteinExistence type="evidence at protein level"/>